<feature type="chain" id="PRO_1000060141" description="Na(+)-translocating NADH-quinone reductase subunit B">
    <location>
        <begin position="1"/>
        <end position="412"/>
    </location>
</feature>
<feature type="transmembrane region" description="Helical" evidence="1">
    <location>
        <begin position="57"/>
        <end position="77"/>
    </location>
</feature>
<feature type="transmembrane region" description="Helical" evidence="1">
    <location>
        <begin position="127"/>
        <end position="147"/>
    </location>
</feature>
<feature type="transmembrane region" description="Helical" evidence="1">
    <location>
        <begin position="163"/>
        <end position="183"/>
    </location>
</feature>
<feature type="transmembrane region" description="Helical" evidence="1">
    <location>
        <begin position="270"/>
        <end position="290"/>
    </location>
</feature>
<feature type="transmembrane region" description="Helical" evidence="1">
    <location>
        <begin position="297"/>
        <end position="317"/>
    </location>
</feature>
<feature type="transmembrane region" description="Helical" evidence="1">
    <location>
        <begin position="322"/>
        <end position="342"/>
    </location>
</feature>
<feature type="transmembrane region" description="Helical" evidence="1">
    <location>
        <begin position="358"/>
        <end position="378"/>
    </location>
</feature>
<feature type="transmembrane region" description="Helical" evidence="1">
    <location>
        <begin position="381"/>
        <end position="401"/>
    </location>
</feature>
<feature type="modified residue" description="FMN phosphoryl threonine" evidence="1">
    <location>
        <position position="236"/>
    </location>
</feature>
<protein>
    <recommendedName>
        <fullName evidence="1">Na(+)-translocating NADH-quinone reductase subunit B</fullName>
        <shortName evidence="1">Na(+)-NQR subunit B</shortName>
        <shortName evidence="1">Na(+)-translocating NQR subunit B</shortName>
        <ecNumber evidence="1">7.2.1.1</ecNumber>
    </recommendedName>
    <alternativeName>
        <fullName evidence="1">NQR complex subunit B</fullName>
    </alternativeName>
    <alternativeName>
        <fullName evidence="1">NQR-1 subunit B</fullName>
    </alternativeName>
</protein>
<reference key="1">
    <citation type="submission" date="2006-09" db="EMBL/GenBank/DDBJ databases">
        <authorList>
            <consortium name="The Klebsiella pneumonia Genome Sequencing Project"/>
            <person name="McClelland M."/>
            <person name="Sanderson E.K."/>
            <person name="Spieth J."/>
            <person name="Clifton W.S."/>
            <person name="Latreille P."/>
            <person name="Sabo A."/>
            <person name="Pepin K."/>
            <person name="Bhonagiri V."/>
            <person name="Porwollik S."/>
            <person name="Ali J."/>
            <person name="Wilson R.K."/>
        </authorList>
    </citation>
    <scope>NUCLEOTIDE SEQUENCE [LARGE SCALE GENOMIC DNA]</scope>
    <source>
        <strain>ATCC 700721 / MGH 78578</strain>
    </source>
</reference>
<comment type="function">
    <text evidence="1">NQR complex catalyzes the reduction of ubiquinone-1 to ubiquinol by two successive reactions, coupled with the transport of Na(+) ions from the cytoplasm to the periplasm. NqrA to NqrE are probably involved in the second step, the conversion of ubisemiquinone to ubiquinol.</text>
</comment>
<comment type="catalytic activity">
    <reaction evidence="1">
        <text>a ubiquinone + n Na(+)(in) + NADH + H(+) = a ubiquinol + n Na(+)(out) + NAD(+)</text>
        <dbReference type="Rhea" id="RHEA:47748"/>
        <dbReference type="Rhea" id="RHEA-COMP:9565"/>
        <dbReference type="Rhea" id="RHEA-COMP:9566"/>
        <dbReference type="ChEBI" id="CHEBI:15378"/>
        <dbReference type="ChEBI" id="CHEBI:16389"/>
        <dbReference type="ChEBI" id="CHEBI:17976"/>
        <dbReference type="ChEBI" id="CHEBI:29101"/>
        <dbReference type="ChEBI" id="CHEBI:57540"/>
        <dbReference type="ChEBI" id="CHEBI:57945"/>
        <dbReference type="EC" id="7.2.1.1"/>
    </reaction>
</comment>
<comment type="cofactor">
    <cofactor evidence="1">
        <name>FMN</name>
        <dbReference type="ChEBI" id="CHEBI:58210"/>
    </cofactor>
</comment>
<comment type="subunit">
    <text evidence="1">Composed of six subunits; NqrA, NqrB, NqrC, NqrD, NqrE and NqrF.</text>
</comment>
<comment type="subcellular location">
    <subcellularLocation>
        <location evidence="1">Cell inner membrane</location>
        <topology evidence="1">Multi-pass membrane protein</topology>
    </subcellularLocation>
</comment>
<comment type="similarity">
    <text evidence="1">Belongs to the NqrB/RnfD family.</text>
</comment>
<name>NQRB_KLEP7</name>
<evidence type="ECO:0000255" key="1">
    <source>
        <dbReference type="HAMAP-Rule" id="MF_00426"/>
    </source>
</evidence>
<accession>A6T522</accession>
<gene>
    <name evidence="1" type="primary">nqrB</name>
    <name type="ordered locus">KPN78578_02320</name>
    <name type="ORF">KPN_00240</name>
</gene>
<sequence length="412" mass="45046">MGLKHLIEKLEPHFTHGGKLEKYYPLYEAAATIFYTPGQVTRGAAHVRDAIDLKRMMILVWFAVFPAMFWGMYNVGLQTIPALHKLYGAEQLQQAIANNWHYSVAQWLGVSFSADAGWLSMMTLGAVFFLPIYITVFIVGGFWEVLFAIVRKHEINEGFFVTSILFALIVPPTLPLWQAALGISFGVVIAKEIFGGTGRNFLNPALAGRAFLFFAYPAQISGDLVWTAADGFSGATPLSQWASGGGEALVNVATGVPVSWMDAFLGNIPGSIGEVSTLMIFIGGAIILFGRVASWRIVAGVMIGMIATATLFNVIGSDTNPMFAMPWYWHLVLGGFAFGMMFMATDPVSASFTDKGKWSYGVLIGVMCVLIRVVNPAYPEGMMLAILFANLFAPLFDYLVVQANIKRRKSRG</sequence>
<keyword id="KW-0997">Cell inner membrane</keyword>
<keyword id="KW-1003">Cell membrane</keyword>
<keyword id="KW-0285">Flavoprotein</keyword>
<keyword id="KW-0288">FMN</keyword>
<keyword id="KW-0406">Ion transport</keyword>
<keyword id="KW-0472">Membrane</keyword>
<keyword id="KW-0520">NAD</keyword>
<keyword id="KW-0597">Phosphoprotein</keyword>
<keyword id="KW-0915">Sodium</keyword>
<keyword id="KW-0739">Sodium transport</keyword>
<keyword id="KW-1278">Translocase</keyword>
<keyword id="KW-0812">Transmembrane</keyword>
<keyword id="KW-1133">Transmembrane helix</keyword>
<keyword id="KW-0813">Transport</keyword>
<keyword id="KW-0830">Ubiquinone</keyword>
<dbReference type="EC" id="7.2.1.1" evidence="1"/>
<dbReference type="EMBL" id="CP000647">
    <property type="protein sequence ID" value="ABR75693.1"/>
    <property type="molecule type" value="Genomic_DNA"/>
</dbReference>
<dbReference type="RefSeq" id="WP_004147186.1">
    <property type="nucleotide sequence ID" value="NC_009648.1"/>
</dbReference>
<dbReference type="SMR" id="A6T522"/>
<dbReference type="STRING" id="272620.KPN_00240"/>
<dbReference type="PaxDb" id="272620-KPN_00240"/>
<dbReference type="EnsemblBacteria" id="ABR75693">
    <property type="protein sequence ID" value="ABR75693"/>
    <property type="gene ID" value="KPN_00240"/>
</dbReference>
<dbReference type="KEGG" id="kpn:KPN_00240"/>
<dbReference type="HOGENOM" id="CLU_042020_1_1_6"/>
<dbReference type="Proteomes" id="UP000000265">
    <property type="component" value="Chromosome"/>
</dbReference>
<dbReference type="GO" id="GO:0005886">
    <property type="term" value="C:plasma membrane"/>
    <property type="evidence" value="ECO:0007669"/>
    <property type="project" value="UniProtKB-SubCell"/>
</dbReference>
<dbReference type="GO" id="GO:0010181">
    <property type="term" value="F:FMN binding"/>
    <property type="evidence" value="ECO:0007669"/>
    <property type="project" value="InterPro"/>
</dbReference>
<dbReference type="GO" id="GO:0016655">
    <property type="term" value="F:oxidoreductase activity, acting on NAD(P)H, quinone or similar compound as acceptor"/>
    <property type="evidence" value="ECO:0007669"/>
    <property type="project" value="UniProtKB-UniRule"/>
</dbReference>
<dbReference type="GO" id="GO:0022904">
    <property type="term" value="P:respiratory electron transport chain"/>
    <property type="evidence" value="ECO:0007669"/>
    <property type="project" value="InterPro"/>
</dbReference>
<dbReference type="GO" id="GO:0006814">
    <property type="term" value="P:sodium ion transport"/>
    <property type="evidence" value="ECO:0007669"/>
    <property type="project" value="UniProtKB-UniRule"/>
</dbReference>
<dbReference type="GO" id="GO:0055085">
    <property type="term" value="P:transmembrane transport"/>
    <property type="evidence" value="ECO:0007669"/>
    <property type="project" value="InterPro"/>
</dbReference>
<dbReference type="HAMAP" id="MF_00426">
    <property type="entry name" value="NqrB"/>
    <property type="match status" value="1"/>
</dbReference>
<dbReference type="InterPro" id="IPR010966">
    <property type="entry name" value="NqrB"/>
</dbReference>
<dbReference type="InterPro" id="IPR004338">
    <property type="entry name" value="NqrB/RnfD"/>
</dbReference>
<dbReference type="NCBIfam" id="TIGR01937">
    <property type="entry name" value="nqrB"/>
    <property type="match status" value="1"/>
</dbReference>
<dbReference type="NCBIfam" id="NF003756">
    <property type="entry name" value="PRK05349.1"/>
    <property type="match status" value="1"/>
</dbReference>
<dbReference type="PANTHER" id="PTHR30578">
    <property type="entry name" value="ELECTRON TRANSPORT COMPLEX PROTEIN RNFD"/>
    <property type="match status" value="1"/>
</dbReference>
<dbReference type="PANTHER" id="PTHR30578:SF1">
    <property type="entry name" value="NA(+)-TRANSLOCATING NADH-QUINONE REDUCTASE SUBUNIT B"/>
    <property type="match status" value="1"/>
</dbReference>
<dbReference type="Pfam" id="PF03116">
    <property type="entry name" value="NQR2_RnfD_RnfE"/>
    <property type="match status" value="1"/>
</dbReference>
<dbReference type="PIRSF" id="PIRSF016055">
    <property type="entry name" value="NADH-UbQ_OxRdtase_B_su"/>
    <property type="match status" value="1"/>
</dbReference>
<proteinExistence type="inferred from homology"/>
<organism>
    <name type="scientific">Klebsiella pneumoniae subsp. pneumoniae (strain ATCC 700721 / MGH 78578)</name>
    <dbReference type="NCBI Taxonomy" id="272620"/>
    <lineage>
        <taxon>Bacteria</taxon>
        <taxon>Pseudomonadati</taxon>
        <taxon>Pseudomonadota</taxon>
        <taxon>Gammaproteobacteria</taxon>
        <taxon>Enterobacterales</taxon>
        <taxon>Enterobacteriaceae</taxon>
        <taxon>Klebsiella/Raoultella group</taxon>
        <taxon>Klebsiella</taxon>
        <taxon>Klebsiella pneumoniae complex</taxon>
    </lineage>
</organism>